<dbReference type="EMBL" id="AM849034">
    <property type="protein sequence ID" value="CAQ00403.1"/>
    <property type="molecule type" value="Genomic_DNA"/>
</dbReference>
<dbReference type="RefSeq" id="WP_012039307.1">
    <property type="nucleotide sequence ID" value="NZ_MZMN01000003.1"/>
</dbReference>
<dbReference type="SMR" id="B0RB38"/>
<dbReference type="STRING" id="31964.CMS0282"/>
<dbReference type="GeneID" id="92984330"/>
<dbReference type="KEGG" id="cms:CMS0282"/>
<dbReference type="eggNOG" id="COG0051">
    <property type="taxonomic scope" value="Bacteria"/>
</dbReference>
<dbReference type="HOGENOM" id="CLU_122625_1_3_11"/>
<dbReference type="OrthoDB" id="9804464at2"/>
<dbReference type="Proteomes" id="UP000001318">
    <property type="component" value="Chromosome"/>
</dbReference>
<dbReference type="GO" id="GO:1990904">
    <property type="term" value="C:ribonucleoprotein complex"/>
    <property type="evidence" value="ECO:0007669"/>
    <property type="project" value="UniProtKB-KW"/>
</dbReference>
<dbReference type="GO" id="GO:0005840">
    <property type="term" value="C:ribosome"/>
    <property type="evidence" value="ECO:0007669"/>
    <property type="project" value="UniProtKB-KW"/>
</dbReference>
<dbReference type="GO" id="GO:0003735">
    <property type="term" value="F:structural constituent of ribosome"/>
    <property type="evidence" value="ECO:0007669"/>
    <property type="project" value="InterPro"/>
</dbReference>
<dbReference type="GO" id="GO:0000049">
    <property type="term" value="F:tRNA binding"/>
    <property type="evidence" value="ECO:0007669"/>
    <property type="project" value="UniProtKB-UniRule"/>
</dbReference>
<dbReference type="GO" id="GO:0006412">
    <property type="term" value="P:translation"/>
    <property type="evidence" value="ECO:0007669"/>
    <property type="project" value="UniProtKB-UniRule"/>
</dbReference>
<dbReference type="FunFam" id="3.30.70.600:FF:000001">
    <property type="entry name" value="30S ribosomal protein S10"/>
    <property type="match status" value="1"/>
</dbReference>
<dbReference type="Gene3D" id="3.30.70.600">
    <property type="entry name" value="Ribosomal protein S10 domain"/>
    <property type="match status" value="1"/>
</dbReference>
<dbReference type="HAMAP" id="MF_00508">
    <property type="entry name" value="Ribosomal_uS10"/>
    <property type="match status" value="1"/>
</dbReference>
<dbReference type="InterPro" id="IPR001848">
    <property type="entry name" value="Ribosomal_uS10"/>
</dbReference>
<dbReference type="InterPro" id="IPR018268">
    <property type="entry name" value="Ribosomal_uS10_CS"/>
</dbReference>
<dbReference type="InterPro" id="IPR027486">
    <property type="entry name" value="Ribosomal_uS10_dom"/>
</dbReference>
<dbReference type="InterPro" id="IPR036838">
    <property type="entry name" value="Ribosomal_uS10_dom_sf"/>
</dbReference>
<dbReference type="NCBIfam" id="NF001861">
    <property type="entry name" value="PRK00596.1"/>
    <property type="match status" value="1"/>
</dbReference>
<dbReference type="NCBIfam" id="TIGR01049">
    <property type="entry name" value="rpsJ_bact"/>
    <property type="match status" value="1"/>
</dbReference>
<dbReference type="PANTHER" id="PTHR11700">
    <property type="entry name" value="30S RIBOSOMAL PROTEIN S10 FAMILY MEMBER"/>
    <property type="match status" value="1"/>
</dbReference>
<dbReference type="Pfam" id="PF00338">
    <property type="entry name" value="Ribosomal_S10"/>
    <property type="match status" value="1"/>
</dbReference>
<dbReference type="PRINTS" id="PR00971">
    <property type="entry name" value="RIBOSOMALS10"/>
</dbReference>
<dbReference type="SMART" id="SM01403">
    <property type="entry name" value="Ribosomal_S10"/>
    <property type="match status" value="1"/>
</dbReference>
<dbReference type="SUPFAM" id="SSF54999">
    <property type="entry name" value="Ribosomal protein S10"/>
    <property type="match status" value="1"/>
</dbReference>
<dbReference type="PROSITE" id="PS00361">
    <property type="entry name" value="RIBOSOMAL_S10"/>
    <property type="match status" value="1"/>
</dbReference>
<reference key="1">
    <citation type="journal article" date="2008" name="J. Bacteriol.">
        <title>Genome of the actinomycete plant pathogen Clavibacter michiganensis subsp. sepedonicus suggests recent niche adaptation.</title>
        <authorList>
            <person name="Bentley S.D."/>
            <person name="Corton C."/>
            <person name="Brown S.E."/>
            <person name="Barron A."/>
            <person name="Clark L."/>
            <person name="Doggett J."/>
            <person name="Harris B."/>
            <person name="Ormond D."/>
            <person name="Quail M.A."/>
            <person name="May G."/>
            <person name="Francis D."/>
            <person name="Knudson D."/>
            <person name="Parkhill J."/>
            <person name="Ishimaru C.A."/>
        </authorList>
    </citation>
    <scope>NUCLEOTIDE SEQUENCE [LARGE SCALE GENOMIC DNA]</scope>
    <source>
        <strain>ATCC 33113 / DSM 20744 / JCM 9667 / LMG 2889 / ICMP 2535 / C-1</strain>
    </source>
</reference>
<name>RS10_CLASE</name>
<accession>B0RB38</accession>
<comment type="function">
    <text evidence="1">Involved in the binding of tRNA to the ribosomes.</text>
</comment>
<comment type="subunit">
    <text evidence="1">Part of the 30S ribosomal subunit.</text>
</comment>
<comment type="similarity">
    <text evidence="1">Belongs to the universal ribosomal protein uS10 family.</text>
</comment>
<protein>
    <recommendedName>
        <fullName evidence="1">Small ribosomal subunit protein uS10</fullName>
    </recommendedName>
    <alternativeName>
        <fullName evidence="2">30S ribosomal protein S10</fullName>
    </alternativeName>
</protein>
<proteinExistence type="inferred from homology"/>
<sequence length="102" mass="11512">MAGQKIRIRLKSYDHSVIDSSARKIVDTVTRAGATVVGPVPLPTEKNVICVIRSPHKYKDSREHFEMRTHKRLIDIVDPTPKAVDSLMRLDLPADVNIEIKL</sequence>
<feature type="chain" id="PRO_1000081542" description="Small ribosomal subunit protein uS10">
    <location>
        <begin position="1"/>
        <end position="102"/>
    </location>
</feature>
<gene>
    <name evidence="1" type="primary">rpsJ</name>
    <name type="ordered locus">CMS0282</name>
</gene>
<evidence type="ECO:0000255" key="1">
    <source>
        <dbReference type="HAMAP-Rule" id="MF_00508"/>
    </source>
</evidence>
<evidence type="ECO:0000305" key="2"/>
<keyword id="KW-0687">Ribonucleoprotein</keyword>
<keyword id="KW-0689">Ribosomal protein</keyword>
<organism>
    <name type="scientific">Clavibacter sepedonicus</name>
    <name type="common">Clavibacter michiganensis subsp. sepedonicus</name>
    <dbReference type="NCBI Taxonomy" id="31964"/>
    <lineage>
        <taxon>Bacteria</taxon>
        <taxon>Bacillati</taxon>
        <taxon>Actinomycetota</taxon>
        <taxon>Actinomycetes</taxon>
        <taxon>Micrococcales</taxon>
        <taxon>Microbacteriaceae</taxon>
        <taxon>Clavibacter</taxon>
    </lineage>
</organism>